<comment type="function">
    <text evidence="1">Provides the (R)-glutamate required for cell wall biosynthesis.</text>
</comment>
<comment type="catalytic activity">
    <reaction evidence="1">
        <text>L-glutamate = D-glutamate</text>
        <dbReference type="Rhea" id="RHEA:12813"/>
        <dbReference type="ChEBI" id="CHEBI:29985"/>
        <dbReference type="ChEBI" id="CHEBI:29986"/>
        <dbReference type="EC" id="5.1.1.3"/>
    </reaction>
</comment>
<comment type="pathway">
    <text evidence="1">Cell wall biogenesis; peptidoglycan biosynthesis.</text>
</comment>
<comment type="similarity">
    <text evidence="1">Belongs to the aspartate/glutamate racemases family.</text>
</comment>
<accession>A7MXD3</accession>
<dbReference type="EC" id="5.1.1.3" evidence="1"/>
<dbReference type="EMBL" id="CP000789">
    <property type="protein sequence ID" value="ABU69285.1"/>
    <property type="molecule type" value="Genomic_DNA"/>
</dbReference>
<dbReference type="RefSeq" id="WP_012126558.1">
    <property type="nucleotide sequence ID" value="NC_009783.1"/>
</dbReference>
<dbReference type="SMR" id="A7MXD3"/>
<dbReference type="KEGG" id="vha:VIBHAR_00256"/>
<dbReference type="PATRIC" id="fig|338187.25.peg.2311"/>
<dbReference type="UniPathway" id="UPA00219"/>
<dbReference type="Proteomes" id="UP000008152">
    <property type="component" value="Chromosome I"/>
</dbReference>
<dbReference type="GO" id="GO:0008881">
    <property type="term" value="F:glutamate racemase activity"/>
    <property type="evidence" value="ECO:0007669"/>
    <property type="project" value="UniProtKB-UniRule"/>
</dbReference>
<dbReference type="GO" id="GO:0071555">
    <property type="term" value="P:cell wall organization"/>
    <property type="evidence" value="ECO:0007669"/>
    <property type="project" value="UniProtKB-KW"/>
</dbReference>
<dbReference type="GO" id="GO:0009252">
    <property type="term" value="P:peptidoglycan biosynthetic process"/>
    <property type="evidence" value="ECO:0007669"/>
    <property type="project" value="UniProtKB-UniRule"/>
</dbReference>
<dbReference type="GO" id="GO:0008360">
    <property type="term" value="P:regulation of cell shape"/>
    <property type="evidence" value="ECO:0007669"/>
    <property type="project" value="UniProtKB-KW"/>
</dbReference>
<dbReference type="FunFam" id="3.40.50.1860:FF:000001">
    <property type="entry name" value="Glutamate racemase"/>
    <property type="match status" value="1"/>
</dbReference>
<dbReference type="Gene3D" id="3.40.50.1860">
    <property type="match status" value="2"/>
</dbReference>
<dbReference type="HAMAP" id="MF_00258">
    <property type="entry name" value="Glu_racemase"/>
    <property type="match status" value="1"/>
</dbReference>
<dbReference type="InterPro" id="IPR015942">
    <property type="entry name" value="Asp/Glu/hydantoin_racemase"/>
</dbReference>
<dbReference type="InterPro" id="IPR001920">
    <property type="entry name" value="Asp/Glu_race"/>
</dbReference>
<dbReference type="InterPro" id="IPR018187">
    <property type="entry name" value="Asp/Glu_racemase_AS_1"/>
</dbReference>
<dbReference type="InterPro" id="IPR004391">
    <property type="entry name" value="Glu_race"/>
</dbReference>
<dbReference type="NCBIfam" id="TIGR00067">
    <property type="entry name" value="glut_race"/>
    <property type="match status" value="1"/>
</dbReference>
<dbReference type="PANTHER" id="PTHR21198">
    <property type="entry name" value="GLUTAMATE RACEMASE"/>
    <property type="match status" value="1"/>
</dbReference>
<dbReference type="PANTHER" id="PTHR21198:SF2">
    <property type="entry name" value="GLUTAMATE RACEMASE"/>
    <property type="match status" value="1"/>
</dbReference>
<dbReference type="Pfam" id="PF01177">
    <property type="entry name" value="Asp_Glu_race"/>
    <property type="match status" value="1"/>
</dbReference>
<dbReference type="SUPFAM" id="SSF53681">
    <property type="entry name" value="Aspartate/glutamate racemase"/>
    <property type="match status" value="2"/>
</dbReference>
<dbReference type="PROSITE" id="PS00923">
    <property type="entry name" value="ASP_GLU_RACEMASE_1"/>
    <property type="match status" value="1"/>
</dbReference>
<evidence type="ECO:0000255" key="1">
    <source>
        <dbReference type="HAMAP-Rule" id="MF_00258"/>
    </source>
</evidence>
<name>MURI_VIBC1</name>
<proteinExistence type="inferred from homology"/>
<gene>
    <name evidence="1" type="primary">murI</name>
    <name type="ordered locus">VIBHAR_00256</name>
</gene>
<feature type="chain" id="PRO_1000047637" description="Glutamate racemase">
    <location>
        <begin position="1"/>
        <end position="268"/>
    </location>
</feature>
<feature type="active site" description="Proton donor/acceptor" evidence="1">
    <location>
        <position position="77"/>
    </location>
</feature>
<feature type="active site" description="Proton donor/acceptor" evidence="1">
    <location>
        <position position="185"/>
    </location>
</feature>
<feature type="binding site" evidence="1">
    <location>
        <begin position="13"/>
        <end position="14"/>
    </location>
    <ligand>
        <name>substrate</name>
    </ligand>
</feature>
<feature type="binding site" evidence="1">
    <location>
        <begin position="45"/>
        <end position="46"/>
    </location>
    <ligand>
        <name>substrate</name>
    </ligand>
</feature>
<feature type="binding site" evidence="1">
    <location>
        <begin position="78"/>
        <end position="79"/>
    </location>
    <ligand>
        <name>substrate</name>
    </ligand>
</feature>
<feature type="binding site" evidence="1">
    <location>
        <begin position="186"/>
        <end position="187"/>
    </location>
    <ligand>
        <name>substrate</name>
    </ligand>
</feature>
<keyword id="KW-0133">Cell shape</keyword>
<keyword id="KW-0961">Cell wall biogenesis/degradation</keyword>
<keyword id="KW-0413">Isomerase</keyword>
<keyword id="KW-0573">Peptidoglycan synthesis</keyword>
<sequence>MRASSKKKVLVFDSGVGGLSVFQEIHRLLPHMDYLYLFDNEAYPYGELDQDVLITRVNKLVAALVEEHQADIVVIACNTASTIVLPSLRANLSIPVVGVVPAIKPASLLASQGVGLIATPATVTRQYTHELIRDFAQGKPVELLGSTRLVDMAEEKLRGESISLSELESILLPLRNKVDVAVLGCTHFPLIKEEIHQALGGEVTLVDSGEAIARRVKALLLNAMKQESREEGSKKIYASAPPWQEDALNTCLANLGFNPVQVYRLPGV</sequence>
<organism>
    <name type="scientific">Vibrio campbellii (strain ATCC BAA-1116)</name>
    <dbReference type="NCBI Taxonomy" id="2902295"/>
    <lineage>
        <taxon>Bacteria</taxon>
        <taxon>Pseudomonadati</taxon>
        <taxon>Pseudomonadota</taxon>
        <taxon>Gammaproteobacteria</taxon>
        <taxon>Vibrionales</taxon>
        <taxon>Vibrionaceae</taxon>
        <taxon>Vibrio</taxon>
    </lineage>
</organism>
<protein>
    <recommendedName>
        <fullName evidence="1">Glutamate racemase</fullName>
        <ecNumber evidence="1">5.1.1.3</ecNumber>
    </recommendedName>
</protein>
<reference key="1">
    <citation type="submission" date="2007-08" db="EMBL/GenBank/DDBJ databases">
        <authorList>
            <consortium name="The Vibrio harveyi Genome Sequencing Project"/>
            <person name="Bassler B."/>
            <person name="Clifton S.W."/>
            <person name="Fulton L."/>
            <person name="Delehaunty K."/>
            <person name="Fronick C."/>
            <person name="Harrison M."/>
            <person name="Markivic C."/>
            <person name="Fulton R."/>
            <person name="Tin-Wollam A.-M."/>
            <person name="Shah N."/>
            <person name="Pepin K."/>
            <person name="Nash W."/>
            <person name="Thiruvilangam P."/>
            <person name="Bhonagiri V."/>
            <person name="Waters C."/>
            <person name="Tu K.C."/>
            <person name="Irgon J."/>
            <person name="Wilson R.K."/>
        </authorList>
    </citation>
    <scope>NUCLEOTIDE SEQUENCE [LARGE SCALE GENOMIC DNA]</scope>
    <source>
        <strain>ATCC BAA-1116 / BB120</strain>
    </source>
</reference>